<comment type="function">
    <text evidence="1">Involved in the binding of tRNA to the ribosomes.</text>
</comment>
<comment type="subunit">
    <text evidence="1">Part of the 30S ribosomal subunit.</text>
</comment>
<comment type="similarity">
    <text evidence="1">Belongs to the universal ribosomal protein uS10 family.</text>
</comment>
<reference key="1">
    <citation type="journal article" date="1999" name="Nature">
        <title>Genomic sequence comparison of two unrelated isolates of the human gastric pathogen Helicobacter pylori.</title>
        <authorList>
            <person name="Alm R.A."/>
            <person name="Ling L.-S.L."/>
            <person name="Moir D.T."/>
            <person name="King B.L."/>
            <person name="Brown E.D."/>
            <person name="Doig P.C."/>
            <person name="Smith D.R."/>
            <person name="Noonan B."/>
            <person name="Guild B.C."/>
            <person name="deJonge B.L."/>
            <person name="Carmel G."/>
            <person name="Tummino P.J."/>
            <person name="Caruso A."/>
            <person name="Uria-Nickelsen M."/>
            <person name="Mills D.M."/>
            <person name="Ives C."/>
            <person name="Gibson R."/>
            <person name="Merberg D."/>
            <person name="Mills S.D."/>
            <person name="Jiang Q."/>
            <person name="Taylor D.E."/>
            <person name="Vovis G.F."/>
            <person name="Trust T.J."/>
        </authorList>
    </citation>
    <scope>NUCLEOTIDE SEQUENCE [LARGE SCALE GENOMIC DNA]</scope>
    <source>
        <strain>J99 / ATCC 700824</strain>
    </source>
</reference>
<organism>
    <name type="scientific">Helicobacter pylori (strain J99 / ATCC 700824)</name>
    <name type="common">Campylobacter pylori J99</name>
    <dbReference type="NCBI Taxonomy" id="85963"/>
    <lineage>
        <taxon>Bacteria</taxon>
        <taxon>Pseudomonadati</taxon>
        <taxon>Campylobacterota</taxon>
        <taxon>Epsilonproteobacteria</taxon>
        <taxon>Campylobacterales</taxon>
        <taxon>Helicobacteraceae</taxon>
        <taxon>Helicobacter</taxon>
    </lineage>
</organism>
<feature type="chain" id="PRO_0000146540" description="Small ribosomal subunit protein uS10">
    <location>
        <begin position="1"/>
        <end position="104"/>
    </location>
</feature>
<sequence>MEKIRLKLKAYDHRVLDRSVVAIVEAVKRSGSEIRGPIPLPTKNKRYTVLRSPHVNKDSREQFEIRVYSRLIDIISATPETVDSLMKLDLAPEVDVEVTSMETK</sequence>
<name>RS10_HELPJ</name>
<evidence type="ECO:0000255" key="1">
    <source>
        <dbReference type="HAMAP-Rule" id="MF_00508"/>
    </source>
</evidence>
<evidence type="ECO:0000305" key="2"/>
<dbReference type="EMBL" id="AE001439">
    <property type="protein sequence ID" value="AAD06791.1"/>
    <property type="molecule type" value="Genomic_DNA"/>
</dbReference>
<dbReference type="RefSeq" id="WP_000411561.1">
    <property type="nucleotide sequence ID" value="NZ_CP011330.1"/>
</dbReference>
<dbReference type="SMR" id="P66329"/>
<dbReference type="GeneID" id="93237549"/>
<dbReference type="KEGG" id="hpj:jhp_1240"/>
<dbReference type="PATRIC" id="fig|85963.30.peg.1331"/>
<dbReference type="eggNOG" id="COG0051">
    <property type="taxonomic scope" value="Bacteria"/>
</dbReference>
<dbReference type="Proteomes" id="UP000000804">
    <property type="component" value="Chromosome"/>
</dbReference>
<dbReference type="GO" id="GO:1990904">
    <property type="term" value="C:ribonucleoprotein complex"/>
    <property type="evidence" value="ECO:0007669"/>
    <property type="project" value="UniProtKB-KW"/>
</dbReference>
<dbReference type="GO" id="GO:0005840">
    <property type="term" value="C:ribosome"/>
    <property type="evidence" value="ECO:0007669"/>
    <property type="project" value="UniProtKB-KW"/>
</dbReference>
<dbReference type="GO" id="GO:0003735">
    <property type="term" value="F:structural constituent of ribosome"/>
    <property type="evidence" value="ECO:0007669"/>
    <property type="project" value="InterPro"/>
</dbReference>
<dbReference type="GO" id="GO:0000049">
    <property type="term" value="F:tRNA binding"/>
    <property type="evidence" value="ECO:0007669"/>
    <property type="project" value="UniProtKB-UniRule"/>
</dbReference>
<dbReference type="GO" id="GO:0006412">
    <property type="term" value="P:translation"/>
    <property type="evidence" value="ECO:0007669"/>
    <property type="project" value="UniProtKB-UniRule"/>
</dbReference>
<dbReference type="FunFam" id="3.30.70.600:FF:000003">
    <property type="entry name" value="30S ribosomal protein S10"/>
    <property type="match status" value="1"/>
</dbReference>
<dbReference type="Gene3D" id="3.30.70.600">
    <property type="entry name" value="Ribosomal protein S10 domain"/>
    <property type="match status" value="1"/>
</dbReference>
<dbReference type="HAMAP" id="MF_00508">
    <property type="entry name" value="Ribosomal_uS10"/>
    <property type="match status" value="1"/>
</dbReference>
<dbReference type="InterPro" id="IPR001848">
    <property type="entry name" value="Ribosomal_uS10"/>
</dbReference>
<dbReference type="InterPro" id="IPR018268">
    <property type="entry name" value="Ribosomal_uS10_CS"/>
</dbReference>
<dbReference type="InterPro" id="IPR027486">
    <property type="entry name" value="Ribosomal_uS10_dom"/>
</dbReference>
<dbReference type="InterPro" id="IPR036838">
    <property type="entry name" value="Ribosomal_uS10_dom_sf"/>
</dbReference>
<dbReference type="NCBIfam" id="NF001861">
    <property type="entry name" value="PRK00596.1"/>
    <property type="match status" value="1"/>
</dbReference>
<dbReference type="NCBIfam" id="TIGR01049">
    <property type="entry name" value="rpsJ_bact"/>
    <property type="match status" value="1"/>
</dbReference>
<dbReference type="PANTHER" id="PTHR11700">
    <property type="entry name" value="30S RIBOSOMAL PROTEIN S10 FAMILY MEMBER"/>
    <property type="match status" value="1"/>
</dbReference>
<dbReference type="Pfam" id="PF00338">
    <property type="entry name" value="Ribosomal_S10"/>
    <property type="match status" value="1"/>
</dbReference>
<dbReference type="PRINTS" id="PR00971">
    <property type="entry name" value="RIBOSOMALS10"/>
</dbReference>
<dbReference type="SMART" id="SM01403">
    <property type="entry name" value="Ribosomal_S10"/>
    <property type="match status" value="1"/>
</dbReference>
<dbReference type="SUPFAM" id="SSF54999">
    <property type="entry name" value="Ribosomal protein S10"/>
    <property type="match status" value="1"/>
</dbReference>
<dbReference type="PROSITE" id="PS00361">
    <property type="entry name" value="RIBOSOMAL_S10"/>
    <property type="match status" value="1"/>
</dbReference>
<keyword id="KW-0687">Ribonucleoprotein</keyword>
<keyword id="KW-0689">Ribosomal protein</keyword>
<gene>
    <name evidence="1" type="primary">rpsJ</name>
    <name type="ordered locus">jhp_1240</name>
</gene>
<proteinExistence type="inferred from homology"/>
<accession>P66329</accession>
<accession>P56017</accession>
<protein>
    <recommendedName>
        <fullName evidence="1">Small ribosomal subunit protein uS10</fullName>
    </recommendedName>
    <alternativeName>
        <fullName evidence="2">30S ribosomal protein S10</fullName>
    </alternativeName>
</protein>